<gene>
    <name evidence="1" type="primary">proB</name>
    <name type="ordered locus">ECS88_0277</name>
</gene>
<reference key="1">
    <citation type="journal article" date="2009" name="PLoS Genet.">
        <title>Organised genome dynamics in the Escherichia coli species results in highly diverse adaptive paths.</title>
        <authorList>
            <person name="Touchon M."/>
            <person name="Hoede C."/>
            <person name="Tenaillon O."/>
            <person name="Barbe V."/>
            <person name="Baeriswyl S."/>
            <person name="Bidet P."/>
            <person name="Bingen E."/>
            <person name="Bonacorsi S."/>
            <person name="Bouchier C."/>
            <person name="Bouvet O."/>
            <person name="Calteau A."/>
            <person name="Chiapello H."/>
            <person name="Clermont O."/>
            <person name="Cruveiller S."/>
            <person name="Danchin A."/>
            <person name="Diard M."/>
            <person name="Dossat C."/>
            <person name="Karoui M.E."/>
            <person name="Frapy E."/>
            <person name="Garry L."/>
            <person name="Ghigo J.M."/>
            <person name="Gilles A.M."/>
            <person name="Johnson J."/>
            <person name="Le Bouguenec C."/>
            <person name="Lescat M."/>
            <person name="Mangenot S."/>
            <person name="Martinez-Jehanne V."/>
            <person name="Matic I."/>
            <person name="Nassif X."/>
            <person name="Oztas S."/>
            <person name="Petit M.A."/>
            <person name="Pichon C."/>
            <person name="Rouy Z."/>
            <person name="Ruf C.S."/>
            <person name="Schneider D."/>
            <person name="Tourret J."/>
            <person name="Vacherie B."/>
            <person name="Vallenet D."/>
            <person name="Medigue C."/>
            <person name="Rocha E.P.C."/>
            <person name="Denamur E."/>
        </authorList>
    </citation>
    <scope>NUCLEOTIDE SEQUENCE [LARGE SCALE GENOMIC DNA]</scope>
    <source>
        <strain>S88 / ExPEC</strain>
    </source>
</reference>
<keyword id="KW-0028">Amino-acid biosynthesis</keyword>
<keyword id="KW-0067">ATP-binding</keyword>
<keyword id="KW-0963">Cytoplasm</keyword>
<keyword id="KW-0418">Kinase</keyword>
<keyword id="KW-0547">Nucleotide-binding</keyword>
<keyword id="KW-0641">Proline biosynthesis</keyword>
<keyword id="KW-1185">Reference proteome</keyword>
<keyword id="KW-0808">Transferase</keyword>
<comment type="function">
    <text evidence="1">Catalyzes the transfer of a phosphate group to glutamate to form L-glutamate 5-phosphate.</text>
</comment>
<comment type="catalytic activity">
    <reaction evidence="1">
        <text>L-glutamate + ATP = L-glutamyl 5-phosphate + ADP</text>
        <dbReference type="Rhea" id="RHEA:14877"/>
        <dbReference type="ChEBI" id="CHEBI:29985"/>
        <dbReference type="ChEBI" id="CHEBI:30616"/>
        <dbReference type="ChEBI" id="CHEBI:58274"/>
        <dbReference type="ChEBI" id="CHEBI:456216"/>
        <dbReference type="EC" id="2.7.2.11"/>
    </reaction>
</comment>
<comment type="pathway">
    <text evidence="1">Amino-acid biosynthesis; L-proline biosynthesis; L-glutamate 5-semialdehyde from L-glutamate: step 1/2.</text>
</comment>
<comment type="subcellular location">
    <subcellularLocation>
        <location evidence="1">Cytoplasm</location>
    </subcellularLocation>
</comment>
<comment type="similarity">
    <text evidence="1">Belongs to the glutamate 5-kinase family.</text>
</comment>
<evidence type="ECO:0000255" key="1">
    <source>
        <dbReference type="HAMAP-Rule" id="MF_00456"/>
    </source>
</evidence>
<organism>
    <name type="scientific">Escherichia coli O45:K1 (strain S88 / ExPEC)</name>
    <dbReference type="NCBI Taxonomy" id="585035"/>
    <lineage>
        <taxon>Bacteria</taxon>
        <taxon>Pseudomonadati</taxon>
        <taxon>Pseudomonadota</taxon>
        <taxon>Gammaproteobacteria</taxon>
        <taxon>Enterobacterales</taxon>
        <taxon>Enterobacteriaceae</taxon>
        <taxon>Escherichia</taxon>
    </lineage>
</organism>
<sequence>MSDSQTLVVKLGTSVLTGGSRRLNRAHIVELVRQCAQLHAAGHRIVIVTSGAIAAGREHLGYPELPATIASKQLLAAVGQSRLIQLWEQLFSIYGIHVGQMLLTRADMEDRERFLNARDTLRALLDNNIVPVINENDAVATAEIKVGDNDNLSALAAILAGADKLLLLTDQKGLYTADPRSNPQAELIKDVYGIDDALRAIAGDSVSGLGTGGMSTKLQAADVACRAGIDTIIAAGSKPGVIGDVMEGISVGTLFHAQATPLENRKRWIFGAPPAGEITVDEGATAAILERGSSLLPKGIKSVTGNFSRGEVIRICNLEGRDIAHGVSRYNSDALRRIAGHHSQEIDAILGYEYGPVAVHRDDMITR</sequence>
<protein>
    <recommendedName>
        <fullName evidence="1">Glutamate 5-kinase</fullName>
        <ecNumber evidence="1">2.7.2.11</ecNumber>
    </recommendedName>
    <alternativeName>
        <fullName evidence="1">Gamma-glutamyl kinase</fullName>
        <shortName evidence="1">GK</shortName>
    </alternativeName>
</protein>
<dbReference type="EC" id="2.7.2.11" evidence="1"/>
<dbReference type="EMBL" id="CU928161">
    <property type="protein sequence ID" value="CAR01632.1"/>
    <property type="molecule type" value="Genomic_DNA"/>
</dbReference>
<dbReference type="RefSeq" id="WP_001285288.1">
    <property type="nucleotide sequence ID" value="NC_011742.1"/>
</dbReference>
<dbReference type="SMR" id="B7MC92"/>
<dbReference type="GeneID" id="93777151"/>
<dbReference type="KEGG" id="ecz:ECS88_0277"/>
<dbReference type="HOGENOM" id="CLU_025400_2_0_6"/>
<dbReference type="UniPathway" id="UPA00098">
    <property type="reaction ID" value="UER00359"/>
</dbReference>
<dbReference type="Proteomes" id="UP000000747">
    <property type="component" value="Chromosome"/>
</dbReference>
<dbReference type="GO" id="GO:0005829">
    <property type="term" value="C:cytosol"/>
    <property type="evidence" value="ECO:0007669"/>
    <property type="project" value="TreeGrafter"/>
</dbReference>
<dbReference type="GO" id="GO:0005524">
    <property type="term" value="F:ATP binding"/>
    <property type="evidence" value="ECO:0007669"/>
    <property type="project" value="UniProtKB-KW"/>
</dbReference>
<dbReference type="GO" id="GO:0004349">
    <property type="term" value="F:glutamate 5-kinase activity"/>
    <property type="evidence" value="ECO:0007669"/>
    <property type="project" value="UniProtKB-UniRule"/>
</dbReference>
<dbReference type="GO" id="GO:0003723">
    <property type="term" value="F:RNA binding"/>
    <property type="evidence" value="ECO:0007669"/>
    <property type="project" value="InterPro"/>
</dbReference>
<dbReference type="GO" id="GO:0055129">
    <property type="term" value="P:L-proline biosynthetic process"/>
    <property type="evidence" value="ECO:0007669"/>
    <property type="project" value="UniProtKB-UniRule"/>
</dbReference>
<dbReference type="CDD" id="cd04242">
    <property type="entry name" value="AAK_G5K_ProB"/>
    <property type="match status" value="1"/>
</dbReference>
<dbReference type="CDD" id="cd21157">
    <property type="entry name" value="PUA_G5K"/>
    <property type="match status" value="1"/>
</dbReference>
<dbReference type="FunFam" id="2.30.130.10:FF:000003">
    <property type="entry name" value="Glutamate 5-kinase"/>
    <property type="match status" value="1"/>
</dbReference>
<dbReference type="FunFam" id="3.40.1160.10:FF:000006">
    <property type="entry name" value="Glutamate 5-kinase"/>
    <property type="match status" value="1"/>
</dbReference>
<dbReference type="Gene3D" id="3.40.1160.10">
    <property type="entry name" value="Acetylglutamate kinase-like"/>
    <property type="match status" value="2"/>
</dbReference>
<dbReference type="Gene3D" id="2.30.130.10">
    <property type="entry name" value="PUA domain"/>
    <property type="match status" value="1"/>
</dbReference>
<dbReference type="HAMAP" id="MF_00456">
    <property type="entry name" value="ProB"/>
    <property type="match status" value="1"/>
</dbReference>
<dbReference type="InterPro" id="IPR036393">
    <property type="entry name" value="AceGlu_kinase-like_sf"/>
</dbReference>
<dbReference type="InterPro" id="IPR001048">
    <property type="entry name" value="Asp/Glu/Uridylate_kinase"/>
</dbReference>
<dbReference type="InterPro" id="IPR041739">
    <property type="entry name" value="G5K_ProB"/>
</dbReference>
<dbReference type="InterPro" id="IPR001057">
    <property type="entry name" value="Glu/AcGlu_kinase"/>
</dbReference>
<dbReference type="InterPro" id="IPR011529">
    <property type="entry name" value="Glu_5kinase"/>
</dbReference>
<dbReference type="InterPro" id="IPR005715">
    <property type="entry name" value="Glu_5kinase/COase_Synthase"/>
</dbReference>
<dbReference type="InterPro" id="IPR019797">
    <property type="entry name" value="Glutamate_5-kinase_CS"/>
</dbReference>
<dbReference type="InterPro" id="IPR002478">
    <property type="entry name" value="PUA"/>
</dbReference>
<dbReference type="InterPro" id="IPR015947">
    <property type="entry name" value="PUA-like_sf"/>
</dbReference>
<dbReference type="InterPro" id="IPR036974">
    <property type="entry name" value="PUA_sf"/>
</dbReference>
<dbReference type="NCBIfam" id="TIGR01027">
    <property type="entry name" value="proB"/>
    <property type="match status" value="1"/>
</dbReference>
<dbReference type="PANTHER" id="PTHR43654">
    <property type="entry name" value="GLUTAMATE 5-KINASE"/>
    <property type="match status" value="1"/>
</dbReference>
<dbReference type="PANTHER" id="PTHR43654:SF1">
    <property type="entry name" value="ISOPENTENYL PHOSPHATE KINASE"/>
    <property type="match status" value="1"/>
</dbReference>
<dbReference type="Pfam" id="PF00696">
    <property type="entry name" value="AA_kinase"/>
    <property type="match status" value="1"/>
</dbReference>
<dbReference type="Pfam" id="PF01472">
    <property type="entry name" value="PUA"/>
    <property type="match status" value="1"/>
</dbReference>
<dbReference type="PIRSF" id="PIRSF000729">
    <property type="entry name" value="GK"/>
    <property type="match status" value="1"/>
</dbReference>
<dbReference type="PRINTS" id="PR00474">
    <property type="entry name" value="GLU5KINASE"/>
</dbReference>
<dbReference type="SMART" id="SM00359">
    <property type="entry name" value="PUA"/>
    <property type="match status" value="1"/>
</dbReference>
<dbReference type="SUPFAM" id="SSF53633">
    <property type="entry name" value="Carbamate kinase-like"/>
    <property type="match status" value="1"/>
</dbReference>
<dbReference type="SUPFAM" id="SSF88697">
    <property type="entry name" value="PUA domain-like"/>
    <property type="match status" value="1"/>
</dbReference>
<dbReference type="PROSITE" id="PS00902">
    <property type="entry name" value="GLUTAMATE_5_KINASE"/>
    <property type="match status" value="1"/>
</dbReference>
<dbReference type="PROSITE" id="PS50890">
    <property type="entry name" value="PUA"/>
    <property type="match status" value="1"/>
</dbReference>
<feature type="chain" id="PRO_1000125228" description="Glutamate 5-kinase">
    <location>
        <begin position="1"/>
        <end position="367"/>
    </location>
</feature>
<feature type="domain" description="PUA" evidence="1">
    <location>
        <begin position="275"/>
        <end position="353"/>
    </location>
</feature>
<feature type="binding site" evidence="1">
    <location>
        <position position="10"/>
    </location>
    <ligand>
        <name>ATP</name>
        <dbReference type="ChEBI" id="CHEBI:30616"/>
    </ligand>
</feature>
<feature type="binding site" evidence="1">
    <location>
        <position position="50"/>
    </location>
    <ligand>
        <name>substrate</name>
    </ligand>
</feature>
<feature type="binding site" evidence="1">
    <location>
        <position position="137"/>
    </location>
    <ligand>
        <name>substrate</name>
    </ligand>
</feature>
<feature type="binding site" evidence="1">
    <location>
        <position position="149"/>
    </location>
    <ligand>
        <name>substrate</name>
    </ligand>
</feature>
<feature type="binding site" evidence="1">
    <location>
        <begin position="169"/>
        <end position="170"/>
    </location>
    <ligand>
        <name>ATP</name>
        <dbReference type="ChEBI" id="CHEBI:30616"/>
    </ligand>
</feature>
<feature type="binding site" evidence="1">
    <location>
        <begin position="211"/>
        <end position="217"/>
    </location>
    <ligand>
        <name>ATP</name>
        <dbReference type="ChEBI" id="CHEBI:30616"/>
    </ligand>
</feature>
<accession>B7MC92</accession>
<name>PROB_ECO45</name>
<proteinExistence type="inferred from homology"/>